<proteinExistence type="inferred from homology"/>
<reference key="1">
    <citation type="journal article" date="2007" name="BMC Genomics">
        <title>Rapid evolutionary change of common bean (Phaseolus vulgaris L) plastome, and the genomic diversification of legume chloroplasts.</title>
        <authorList>
            <person name="Guo X."/>
            <person name="Castillo-Ramirez S."/>
            <person name="Gonzalez V."/>
            <person name="Bustos P."/>
            <person name="Fernandez-Vazquez J.L."/>
            <person name="Santamaria R.I."/>
            <person name="Arellano J."/>
            <person name="Cevallos M.A."/>
            <person name="Davila G."/>
        </authorList>
    </citation>
    <scope>NUCLEOTIDE SEQUENCE [LARGE SCALE GENOMIC DNA]</scope>
    <source>
        <strain>cv. Negro Jamapa</strain>
    </source>
</reference>
<reference key="2">
    <citation type="submission" date="2007-10" db="EMBL/GenBank/DDBJ databases">
        <title>Complete nucleotide sequence of the plastid genome of the common bean, Phaseolus vulgaris.</title>
        <authorList>
            <person name="Moore M.J."/>
            <person name="Triplett E.W."/>
            <person name="Broughton W.J."/>
            <person name="Soltis P.S."/>
            <person name="Soltis D.E."/>
        </authorList>
    </citation>
    <scope>NUCLEOTIDE SEQUENCE [LARGE SCALE GENOMIC DNA]</scope>
</reference>
<dbReference type="EC" id="7.1.1.-" evidence="1"/>
<dbReference type="EMBL" id="DQ886273">
    <property type="protein sequence ID" value="ABH88139.1"/>
    <property type="molecule type" value="Genomic_DNA"/>
</dbReference>
<dbReference type="EMBL" id="EU196765">
    <property type="protein sequence ID" value="ABW22808.1"/>
    <property type="molecule type" value="Genomic_DNA"/>
</dbReference>
<dbReference type="SMR" id="P0CD28"/>
<dbReference type="KEGG" id="pvu:4961767"/>
<dbReference type="KEGG" id="pvu:5075325"/>
<dbReference type="eggNOG" id="KOG4668">
    <property type="taxonomic scope" value="Eukaryota"/>
</dbReference>
<dbReference type="GO" id="GO:0009535">
    <property type="term" value="C:chloroplast thylakoid membrane"/>
    <property type="evidence" value="ECO:0007669"/>
    <property type="project" value="UniProtKB-SubCell"/>
</dbReference>
<dbReference type="GO" id="GO:0008137">
    <property type="term" value="F:NADH dehydrogenase (ubiquinone) activity"/>
    <property type="evidence" value="ECO:0007669"/>
    <property type="project" value="InterPro"/>
</dbReference>
<dbReference type="GO" id="GO:0048038">
    <property type="term" value="F:quinone binding"/>
    <property type="evidence" value="ECO:0007669"/>
    <property type="project" value="UniProtKB-KW"/>
</dbReference>
<dbReference type="GO" id="GO:0042773">
    <property type="term" value="P:ATP synthesis coupled electron transport"/>
    <property type="evidence" value="ECO:0007669"/>
    <property type="project" value="InterPro"/>
</dbReference>
<dbReference type="GO" id="GO:0019684">
    <property type="term" value="P:photosynthesis, light reaction"/>
    <property type="evidence" value="ECO:0007669"/>
    <property type="project" value="UniProtKB-UniRule"/>
</dbReference>
<dbReference type="HAMAP" id="MF_00445">
    <property type="entry name" value="NDH1_NuoN_1"/>
    <property type="match status" value="1"/>
</dbReference>
<dbReference type="InterPro" id="IPR010096">
    <property type="entry name" value="NADH-Q_OxRdtase_suN/2"/>
</dbReference>
<dbReference type="InterPro" id="IPR001750">
    <property type="entry name" value="ND/Mrp_TM"/>
</dbReference>
<dbReference type="InterPro" id="IPR045693">
    <property type="entry name" value="Ndh2_N"/>
</dbReference>
<dbReference type="NCBIfam" id="TIGR01770">
    <property type="entry name" value="NDH_I_N"/>
    <property type="match status" value="1"/>
</dbReference>
<dbReference type="NCBIfam" id="NF002701">
    <property type="entry name" value="PRK02504.1"/>
    <property type="match status" value="1"/>
</dbReference>
<dbReference type="PANTHER" id="PTHR22773">
    <property type="entry name" value="NADH DEHYDROGENASE"/>
    <property type="match status" value="1"/>
</dbReference>
<dbReference type="Pfam" id="PF19530">
    <property type="entry name" value="Ndh2_N"/>
    <property type="match status" value="1"/>
</dbReference>
<dbReference type="Pfam" id="PF00361">
    <property type="entry name" value="Proton_antipo_M"/>
    <property type="match status" value="1"/>
</dbReference>
<dbReference type="PRINTS" id="PR01434">
    <property type="entry name" value="NADHDHGNASE5"/>
</dbReference>
<evidence type="ECO:0000255" key="1">
    <source>
        <dbReference type="HAMAP-Rule" id="MF_00445"/>
    </source>
</evidence>
<evidence type="ECO:0000305" key="2"/>
<gene>
    <name evidence="1" type="primary">ndhB1</name>
</gene>
<feature type="chain" id="PRO_0000344279" description="NAD(P)H-quinone oxidoreductase subunit 2 A, chloroplastic">
    <location>
        <begin position="1"/>
        <end position="492"/>
    </location>
</feature>
<feature type="transmembrane region" description="Helical" evidence="1">
    <location>
        <begin position="6"/>
        <end position="26"/>
    </location>
</feature>
<feature type="transmembrane region" description="Helical" evidence="1">
    <location>
        <begin position="39"/>
        <end position="59"/>
    </location>
</feature>
<feature type="transmembrane region" description="Helical" evidence="1">
    <location>
        <begin position="81"/>
        <end position="101"/>
    </location>
</feature>
<feature type="transmembrane region" description="Helical" evidence="1">
    <location>
        <begin position="106"/>
        <end position="126"/>
    </location>
</feature>
<feature type="transmembrane region" description="Helical" evidence="1">
    <location>
        <begin position="131"/>
        <end position="151"/>
    </location>
</feature>
<feature type="transmembrane region" description="Helical" evidence="1">
    <location>
        <begin position="165"/>
        <end position="185"/>
    </location>
</feature>
<feature type="transmembrane region" description="Helical" evidence="1">
    <location>
        <begin position="209"/>
        <end position="229"/>
    </location>
</feature>
<feature type="transmembrane region" description="Helical" evidence="1">
    <location>
        <begin position="277"/>
        <end position="297"/>
    </location>
</feature>
<feature type="transmembrane region" description="Helical" evidence="1">
    <location>
        <begin position="305"/>
        <end position="325"/>
    </location>
</feature>
<feature type="transmembrane region" description="Helical" evidence="1">
    <location>
        <begin position="336"/>
        <end position="356"/>
    </location>
</feature>
<feature type="transmembrane region" description="Helical" evidence="1">
    <location>
        <begin position="377"/>
        <end position="397"/>
    </location>
</feature>
<feature type="transmembrane region" description="Helical" evidence="1">
    <location>
        <begin position="400"/>
        <end position="420"/>
    </location>
</feature>
<feature type="transmembrane region" description="Helical" evidence="1">
    <location>
        <begin position="464"/>
        <end position="484"/>
    </location>
</feature>
<protein>
    <recommendedName>
        <fullName evidence="1">NAD(P)H-quinone oxidoreductase subunit 2 A, chloroplastic</fullName>
        <ecNumber evidence="1">7.1.1.-</ecNumber>
    </recommendedName>
    <alternativeName>
        <fullName evidence="1">NAD(P)H dehydrogenase, subunit 2 A</fullName>
    </alternativeName>
    <alternativeName>
        <fullName evidence="1">NADH-plastoquinone oxidoreductase subunit 2 A</fullName>
    </alternativeName>
</protein>
<sequence length="492" mass="54449">MKAFHLLLFDGSLIFPECILIFGLILLLMIDSTSDQKDISWFYFISSTSLVMSITALLFRWREEPMIAFSGNLQTNNFNEIFQFLILLCSTLCIPLSVEYIECTEMAITEFLLFILTTTLGGMFLCGANDLITIFVALECFSLCSYLLSGYTKKDVRSNEATTKYLLMGGASSSILVHGFSWLYGSSGGEIELQEIVNGLINTQMYNSPGILIALLFITVGIGFKLSPAPSHQWTPDVYEGSPTPVVAFLSVTSKVAASASATRIFDIPFYFSSNEWHLLLEILAILSMILGNLIAITQTSMKRMLAYSSIGQIGYVIIGIIVGDSNGGYASMITYMLFYISMNLGTFACIVSFGLRTGTDNIRDYAGLYTKDPYLALSLALCLLSLGGLPPLAGFFGKLHLFWCGWQAGLYFLVSIGLLTSVVSIYYYLKIIKLLMTGRNQEITPHVRNYRRSPFRSNNSIEFSMIVCVIASTIPGISMNPIIEIAQDTLF</sequence>
<organism>
    <name type="scientific">Phaseolus vulgaris</name>
    <name type="common">Kidney bean</name>
    <name type="synonym">French bean</name>
    <dbReference type="NCBI Taxonomy" id="3885"/>
    <lineage>
        <taxon>Eukaryota</taxon>
        <taxon>Viridiplantae</taxon>
        <taxon>Streptophyta</taxon>
        <taxon>Embryophyta</taxon>
        <taxon>Tracheophyta</taxon>
        <taxon>Spermatophyta</taxon>
        <taxon>Magnoliopsida</taxon>
        <taxon>eudicotyledons</taxon>
        <taxon>Gunneridae</taxon>
        <taxon>Pentapetalae</taxon>
        <taxon>rosids</taxon>
        <taxon>fabids</taxon>
        <taxon>Fabales</taxon>
        <taxon>Fabaceae</taxon>
        <taxon>Papilionoideae</taxon>
        <taxon>50 kb inversion clade</taxon>
        <taxon>NPAAA clade</taxon>
        <taxon>indigoferoid/millettioid clade</taxon>
        <taxon>Phaseoleae</taxon>
        <taxon>Phaseolus</taxon>
    </lineage>
</organism>
<accession>P0CD28</accession>
<accession>A4GGF6</accession>
<geneLocation type="chloroplast"/>
<keyword id="KW-0150">Chloroplast</keyword>
<keyword id="KW-0472">Membrane</keyword>
<keyword id="KW-0520">NAD</keyword>
<keyword id="KW-0521">NADP</keyword>
<keyword id="KW-0934">Plastid</keyword>
<keyword id="KW-0618">Plastoquinone</keyword>
<keyword id="KW-0874">Quinone</keyword>
<keyword id="KW-0793">Thylakoid</keyword>
<keyword id="KW-1278">Translocase</keyword>
<keyword id="KW-0812">Transmembrane</keyword>
<keyword id="KW-1133">Transmembrane helix</keyword>
<keyword id="KW-0813">Transport</keyword>
<name>NU2C1_PHAVU</name>
<comment type="function">
    <text evidence="1">NDH shuttles electrons from NAD(P)H:plastoquinone, via FMN and iron-sulfur (Fe-S) centers, to quinones in the photosynthetic chain and possibly in a chloroplast respiratory chain. The immediate electron acceptor for the enzyme in this species is believed to be plastoquinone. Couples the redox reaction to proton translocation, and thus conserves the redox energy in a proton gradient.</text>
</comment>
<comment type="catalytic activity">
    <reaction evidence="1">
        <text>a plastoquinone + NADH + (n+1) H(+)(in) = a plastoquinol + NAD(+) + n H(+)(out)</text>
        <dbReference type="Rhea" id="RHEA:42608"/>
        <dbReference type="Rhea" id="RHEA-COMP:9561"/>
        <dbReference type="Rhea" id="RHEA-COMP:9562"/>
        <dbReference type="ChEBI" id="CHEBI:15378"/>
        <dbReference type="ChEBI" id="CHEBI:17757"/>
        <dbReference type="ChEBI" id="CHEBI:57540"/>
        <dbReference type="ChEBI" id="CHEBI:57945"/>
        <dbReference type="ChEBI" id="CHEBI:62192"/>
    </reaction>
</comment>
<comment type="catalytic activity">
    <reaction evidence="1">
        <text>a plastoquinone + NADPH + (n+1) H(+)(in) = a plastoquinol + NADP(+) + n H(+)(out)</text>
        <dbReference type="Rhea" id="RHEA:42612"/>
        <dbReference type="Rhea" id="RHEA-COMP:9561"/>
        <dbReference type="Rhea" id="RHEA-COMP:9562"/>
        <dbReference type="ChEBI" id="CHEBI:15378"/>
        <dbReference type="ChEBI" id="CHEBI:17757"/>
        <dbReference type="ChEBI" id="CHEBI:57783"/>
        <dbReference type="ChEBI" id="CHEBI:58349"/>
        <dbReference type="ChEBI" id="CHEBI:62192"/>
    </reaction>
</comment>
<comment type="subunit">
    <text evidence="1">NDH is composed of at least 16 different subunits, 5 of which are encoded in the nucleus.</text>
</comment>
<comment type="subcellular location">
    <subcellularLocation>
        <location evidence="1">Plastid</location>
        <location evidence="1">Chloroplast thylakoid membrane</location>
        <topology evidence="1">Multi-pass membrane protein</topology>
    </subcellularLocation>
</comment>
<comment type="similarity">
    <text evidence="1">Belongs to the complex I subunit 2 family.</text>
</comment>
<comment type="caution">
    <text evidence="2">This protein is smaller than usual in this organism, and may not be functional.</text>
</comment>